<gene>
    <name evidence="1" type="primary">lacB1</name>
    <name type="synonym">lacB.1</name>
    <name type="ordered locus">SpyM3_1484</name>
</gene>
<protein>
    <recommendedName>
        <fullName evidence="1">Galactose-6-phosphate isomerase subunit LacB 1</fullName>
        <ecNumber evidence="1">5.3.1.26</ecNumber>
    </recommendedName>
</protein>
<accession>P0DC08</accession>
<accession>Q79YA1</accession>
<accession>Q8K652</accession>
<comment type="catalytic activity">
    <reaction evidence="1">
        <text>aldehydo-D-galactose 6-phosphate = keto-D-tagatose 6-phosphate</text>
        <dbReference type="Rhea" id="RHEA:13033"/>
        <dbReference type="ChEBI" id="CHEBI:58255"/>
        <dbReference type="ChEBI" id="CHEBI:134283"/>
        <dbReference type="EC" id="5.3.1.26"/>
    </reaction>
</comment>
<comment type="pathway">
    <text evidence="1">Carbohydrate metabolism; D-galactose 6-phosphate degradation; D-tagatose 6-phosphate from D-galactose 6-phosphate: step 1/1.</text>
</comment>
<comment type="subunit">
    <text evidence="1">Heteromultimeric protein consisting of LacA and LacB.</text>
</comment>
<comment type="similarity">
    <text evidence="1">Belongs to the LacAB/RpiB family.</text>
</comment>
<reference key="1">
    <citation type="journal article" date="2002" name="Proc. Natl. Acad. Sci. U.S.A.">
        <title>Genome sequence of a serotype M3 strain of group A Streptococcus: phage-encoded toxins, the high-virulence phenotype, and clone emergence.</title>
        <authorList>
            <person name="Beres S.B."/>
            <person name="Sylva G.L."/>
            <person name="Barbian K.D."/>
            <person name="Lei B."/>
            <person name="Hoff J.S."/>
            <person name="Mammarella N.D."/>
            <person name="Liu M.-Y."/>
            <person name="Smoot J.C."/>
            <person name="Porcella S.F."/>
            <person name="Parkins L.D."/>
            <person name="Campbell D.S."/>
            <person name="Smith T.M."/>
            <person name="McCormick J.K."/>
            <person name="Leung D.Y.M."/>
            <person name="Schlievert P.M."/>
            <person name="Musser J.M."/>
        </authorList>
    </citation>
    <scope>NUCLEOTIDE SEQUENCE [LARGE SCALE GENOMIC DNA]</scope>
    <source>
        <strain>ATCC BAA-595 / MGAS315</strain>
    </source>
</reference>
<organism>
    <name type="scientific">Streptococcus pyogenes serotype M3 (strain ATCC BAA-595 / MGAS315)</name>
    <dbReference type="NCBI Taxonomy" id="198466"/>
    <lineage>
        <taxon>Bacteria</taxon>
        <taxon>Bacillati</taxon>
        <taxon>Bacillota</taxon>
        <taxon>Bacilli</taxon>
        <taxon>Lactobacillales</taxon>
        <taxon>Streptococcaceae</taxon>
        <taxon>Streptococcus</taxon>
    </lineage>
</organism>
<name>LACB1_STRP3</name>
<keyword id="KW-0413">Isomerase</keyword>
<keyword id="KW-0423">Lactose metabolism</keyword>
<dbReference type="EC" id="5.3.1.26" evidence="1"/>
<dbReference type="EMBL" id="AE014074">
    <property type="protein sequence ID" value="AAM80091.1"/>
    <property type="molecule type" value="Genomic_DNA"/>
</dbReference>
<dbReference type="SMR" id="P0DC08"/>
<dbReference type="KEGG" id="spg:SpyM3_1484"/>
<dbReference type="HOGENOM" id="CLU_091396_2_0_9"/>
<dbReference type="UniPathway" id="UPA00702">
    <property type="reaction ID" value="UER00714"/>
</dbReference>
<dbReference type="Proteomes" id="UP000000564">
    <property type="component" value="Chromosome"/>
</dbReference>
<dbReference type="GO" id="GO:0050044">
    <property type="term" value="F:galactose-6-phosphate isomerase activity"/>
    <property type="evidence" value="ECO:0007669"/>
    <property type="project" value="UniProtKB-UniRule"/>
</dbReference>
<dbReference type="GO" id="GO:0004751">
    <property type="term" value="F:ribose-5-phosphate isomerase activity"/>
    <property type="evidence" value="ECO:0007669"/>
    <property type="project" value="TreeGrafter"/>
</dbReference>
<dbReference type="GO" id="GO:0019316">
    <property type="term" value="P:D-allose catabolic process"/>
    <property type="evidence" value="ECO:0007669"/>
    <property type="project" value="TreeGrafter"/>
</dbReference>
<dbReference type="GO" id="GO:0019388">
    <property type="term" value="P:galactose catabolic process"/>
    <property type="evidence" value="ECO:0007669"/>
    <property type="project" value="UniProtKB-UniPathway"/>
</dbReference>
<dbReference type="GO" id="GO:0019512">
    <property type="term" value="P:lactose catabolic process via tagatose-6-phosphate"/>
    <property type="evidence" value="ECO:0007669"/>
    <property type="project" value="UniProtKB-UniRule"/>
</dbReference>
<dbReference type="GO" id="GO:0009052">
    <property type="term" value="P:pentose-phosphate shunt, non-oxidative branch"/>
    <property type="evidence" value="ECO:0007669"/>
    <property type="project" value="TreeGrafter"/>
</dbReference>
<dbReference type="Gene3D" id="3.40.1400.10">
    <property type="entry name" value="Sugar-phosphate isomerase, RpiB/LacA/LacB"/>
    <property type="match status" value="1"/>
</dbReference>
<dbReference type="HAMAP" id="MF_01556">
    <property type="entry name" value="LacB"/>
    <property type="match status" value="1"/>
</dbReference>
<dbReference type="InterPro" id="IPR004784">
    <property type="entry name" value="LacB"/>
</dbReference>
<dbReference type="InterPro" id="IPR003500">
    <property type="entry name" value="RpiB_LacA_LacB"/>
</dbReference>
<dbReference type="InterPro" id="IPR036569">
    <property type="entry name" value="RpiB_LacA_LacB_sf"/>
</dbReference>
<dbReference type="NCBIfam" id="TIGR01119">
    <property type="entry name" value="lacB"/>
    <property type="match status" value="1"/>
</dbReference>
<dbReference type="NCBIfam" id="NF004051">
    <property type="entry name" value="PRK05571.1"/>
    <property type="match status" value="1"/>
</dbReference>
<dbReference type="NCBIfam" id="NF006381">
    <property type="entry name" value="PRK08622.1"/>
    <property type="match status" value="1"/>
</dbReference>
<dbReference type="NCBIfam" id="NF009258">
    <property type="entry name" value="PRK12615.1"/>
    <property type="match status" value="1"/>
</dbReference>
<dbReference type="NCBIfam" id="TIGR00689">
    <property type="entry name" value="rpiB_lacA_lacB"/>
    <property type="match status" value="1"/>
</dbReference>
<dbReference type="PANTHER" id="PTHR30345:SF0">
    <property type="entry name" value="DNA DAMAGE-REPAIR_TOLERATION PROTEIN DRT102"/>
    <property type="match status" value="1"/>
</dbReference>
<dbReference type="PANTHER" id="PTHR30345">
    <property type="entry name" value="RIBOSE-5-PHOSPHATE ISOMERASE B"/>
    <property type="match status" value="1"/>
</dbReference>
<dbReference type="Pfam" id="PF02502">
    <property type="entry name" value="LacAB_rpiB"/>
    <property type="match status" value="1"/>
</dbReference>
<dbReference type="PIRSF" id="PIRSF005384">
    <property type="entry name" value="RpiB_LacA_B"/>
    <property type="match status" value="1"/>
</dbReference>
<dbReference type="SUPFAM" id="SSF89623">
    <property type="entry name" value="Ribose/Galactose isomerase RpiB/AlsB"/>
    <property type="match status" value="1"/>
</dbReference>
<evidence type="ECO:0000255" key="1">
    <source>
        <dbReference type="HAMAP-Rule" id="MF_01556"/>
    </source>
</evidence>
<proteinExistence type="inferred from homology"/>
<feature type="chain" id="PRO_0000208159" description="Galactose-6-phosphate isomerase subunit LacB 1">
    <location>
        <begin position="1"/>
        <end position="171"/>
    </location>
</feature>
<sequence length="171" mass="18959">MKIAIGCDHIVTNEKMAVSDFLKSKGYDVIDYGTYDHTRTHYPIFGKKVGEAVVSGQADLGVCICGTGVGINNAVNKVPGIRSALVRDMTTALYAKEELNANVIGFGGKITGELLMCDIIDAFIKAEYKETEENKKLIAKIAHLESHHANQEDPDFFTEFLEKWDRGEYHD</sequence>